<sequence length="286" mass="32876">MPAATVDHSQRICEVWACNLEEEMKRIRQVTRKFNYIAMDTEFPGVVARPIGEFRSNADYQYQLLRCNVDLLKIIQLGLTFMNEQGEYPPGTSTWQFNFKFNLTEDMYAQDSIELLTSSGIQFKKHEEEGIETMYFAELLMTSGVVLCEGVKWLSFHSGYDFGYLIKILSNSKLPDEEVDFFEILRLFFPIIYDVKYLMKSCKNLKGGLQEVAEQLELERIGPQHQAGSDSLLTGMAFFKMREMFFEDHIDDAKYCGHLYGLGSGSSYVQNGTGNAYEEEANKQQS</sequence>
<organism>
    <name type="scientific">Danio rerio</name>
    <name type="common">Zebrafish</name>
    <name type="synonym">Brachydanio rerio</name>
    <dbReference type="NCBI Taxonomy" id="7955"/>
    <lineage>
        <taxon>Eukaryota</taxon>
        <taxon>Metazoa</taxon>
        <taxon>Chordata</taxon>
        <taxon>Craniata</taxon>
        <taxon>Vertebrata</taxon>
        <taxon>Euteleostomi</taxon>
        <taxon>Actinopterygii</taxon>
        <taxon>Neopterygii</taxon>
        <taxon>Teleostei</taxon>
        <taxon>Ostariophysi</taxon>
        <taxon>Cypriniformes</taxon>
        <taxon>Danionidae</taxon>
        <taxon>Danioninae</taxon>
        <taxon>Danio</taxon>
    </lineage>
</organism>
<evidence type="ECO:0000250" key="1"/>
<evidence type="ECO:0000250" key="2">
    <source>
        <dbReference type="UniProtKB" id="Q9UIV1"/>
    </source>
</evidence>
<evidence type="ECO:0000305" key="3"/>
<keyword id="KW-0963">Cytoplasm</keyword>
<keyword id="KW-0269">Exonuclease</keyword>
<keyword id="KW-0378">Hydrolase</keyword>
<keyword id="KW-0460">Magnesium</keyword>
<keyword id="KW-0479">Metal-binding</keyword>
<keyword id="KW-0540">Nuclease</keyword>
<keyword id="KW-0539">Nucleus</keyword>
<keyword id="KW-1185">Reference proteome</keyword>
<keyword id="KW-0678">Repressor</keyword>
<keyword id="KW-0694">RNA-binding</keyword>
<keyword id="KW-0943">RNA-mediated gene silencing</keyword>
<keyword id="KW-0804">Transcription</keyword>
<keyword id="KW-0805">Transcription regulation</keyword>
<keyword id="KW-0810">Translation regulation</keyword>
<gene>
    <name type="primary">cnot7</name>
    <name type="synonym">caf1</name>
    <name type="ORF">zgc:153168</name>
</gene>
<dbReference type="EC" id="3.1.13.4"/>
<dbReference type="EMBL" id="BC124650">
    <property type="protein sequence ID" value="AAI24651.1"/>
    <property type="molecule type" value="mRNA"/>
</dbReference>
<dbReference type="RefSeq" id="NP_001070723.1">
    <property type="nucleotide sequence ID" value="NM_001077255.1"/>
</dbReference>
<dbReference type="RefSeq" id="XP_017214517.1">
    <property type="nucleotide sequence ID" value="XM_017359028.1"/>
</dbReference>
<dbReference type="RefSeq" id="XP_068069350.1">
    <property type="nucleotide sequence ID" value="XM_068213249.1"/>
</dbReference>
<dbReference type="SMR" id="Q08BM8"/>
<dbReference type="FunCoup" id="Q08BM8">
    <property type="interactions" value="3013"/>
</dbReference>
<dbReference type="STRING" id="7955.ENSDARP00000087385"/>
<dbReference type="PaxDb" id="7955-ENSDARP00000087385"/>
<dbReference type="Ensembl" id="ENSDART00000092953">
    <property type="protein sequence ID" value="ENSDARP00000087385"/>
    <property type="gene ID" value="ENSDARG00000032116"/>
</dbReference>
<dbReference type="Ensembl" id="ENSDART00000180961">
    <property type="protein sequence ID" value="ENSDARP00000151775"/>
    <property type="gene ID" value="ENSDARG00000115413"/>
</dbReference>
<dbReference type="Ensembl" id="ENSDART00000186864">
    <property type="protein sequence ID" value="ENSDARP00000156128"/>
    <property type="gene ID" value="ENSDARG00000032116"/>
</dbReference>
<dbReference type="GeneID" id="768119"/>
<dbReference type="KEGG" id="dre:768119"/>
<dbReference type="AGR" id="ZFIN:ZDB-GENE-061013-29"/>
<dbReference type="CTD" id="29883"/>
<dbReference type="ZFIN" id="ZDB-GENE-061013-29">
    <property type="gene designation" value="cnot7"/>
</dbReference>
<dbReference type="eggNOG" id="KOG0304">
    <property type="taxonomic scope" value="Eukaryota"/>
</dbReference>
<dbReference type="HOGENOM" id="CLU_027974_0_1_1"/>
<dbReference type="InParanoid" id="Q08BM8"/>
<dbReference type="OMA" id="IKFMMRA"/>
<dbReference type="OrthoDB" id="1164111at2759"/>
<dbReference type="PhylomeDB" id="Q08BM8"/>
<dbReference type="TreeFam" id="TF314185"/>
<dbReference type="Reactome" id="R-DRE-6804115">
    <property type="pathway name" value="TP53 regulates transcription of additional cell cycle genes whose exact role in the p53 pathway remain uncertain"/>
</dbReference>
<dbReference type="PRO" id="PR:Q08BM8"/>
<dbReference type="Proteomes" id="UP000000437">
    <property type="component" value="Alternate scaffold 14"/>
</dbReference>
<dbReference type="Proteomes" id="UP000000437">
    <property type="component" value="Chromosome 14"/>
</dbReference>
<dbReference type="Bgee" id="ENSDARG00000032116">
    <property type="expression patterns" value="Expressed in mature ovarian follicle and 25 other cell types or tissues"/>
</dbReference>
<dbReference type="ExpressionAtlas" id="Q08BM8">
    <property type="expression patterns" value="baseline"/>
</dbReference>
<dbReference type="GO" id="GO:0030014">
    <property type="term" value="C:CCR4-NOT complex"/>
    <property type="evidence" value="ECO:0000250"/>
    <property type="project" value="UniProtKB"/>
</dbReference>
<dbReference type="GO" id="GO:0030015">
    <property type="term" value="C:CCR4-NOT core complex"/>
    <property type="evidence" value="ECO:0000318"/>
    <property type="project" value="GO_Central"/>
</dbReference>
<dbReference type="GO" id="GO:0005634">
    <property type="term" value="C:nucleus"/>
    <property type="evidence" value="ECO:0007669"/>
    <property type="project" value="UniProtKB-SubCell"/>
</dbReference>
<dbReference type="GO" id="GO:0000932">
    <property type="term" value="C:P-body"/>
    <property type="evidence" value="ECO:0000318"/>
    <property type="project" value="GO_Central"/>
</dbReference>
<dbReference type="GO" id="GO:0000175">
    <property type="term" value="F:3'-5'-RNA exonuclease activity"/>
    <property type="evidence" value="ECO:0000250"/>
    <property type="project" value="UniProtKB"/>
</dbReference>
<dbReference type="GO" id="GO:0046872">
    <property type="term" value="F:metal ion binding"/>
    <property type="evidence" value="ECO:0007669"/>
    <property type="project" value="UniProtKB-KW"/>
</dbReference>
<dbReference type="GO" id="GO:0004535">
    <property type="term" value="F:poly(A)-specific ribonuclease activity"/>
    <property type="evidence" value="ECO:0000250"/>
    <property type="project" value="UniProtKB"/>
</dbReference>
<dbReference type="GO" id="GO:0003723">
    <property type="term" value="F:RNA binding"/>
    <property type="evidence" value="ECO:0007669"/>
    <property type="project" value="UniProtKB-KW"/>
</dbReference>
<dbReference type="GO" id="GO:0004532">
    <property type="term" value="F:RNA exonuclease activity"/>
    <property type="evidence" value="ECO:0000250"/>
    <property type="project" value="UniProtKB"/>
</dbReference>
<dbReference type="GO" id="GO:0035279">
    <property type="term" value="P:miRNA-mediated gene silencing by mRNA destabilization"/>
    <property type="evidence" value="ECO:0000250"/>
    <property type="project" value="UniProtKB"/>
</dbReference>
<dbReference type="GO" id="GO:0006402">
    <property type="term" value="P:mRNA catabolic process"/>
    <property type="evidence" value="ECO:0000315"/>
    <property type="project" value="ZFIN"/>
</dbReference>
<dbReference type="GO" id="GO:0008285">
    <property type="term" value="P:negative regulation of cell population proliferation"/>
    <property type="evidence" value="ECO:0000250"/>
    <property type="project" value="UniProtKB"/>
</dbReference>
<dbReference type="GO" id="GO:0000288">
    <property type="term" value="P:nuclear-transcribed mRNA catabolic process, deadenylation-dependent decay"/>
    <property type="evidence" value="ECO:0000318"/>
    <property type="project" value="GO_Central"/>
</dbReference>
<dbReference type="GO" id="GO:0008284">
    <property type="term" value="P:positive regulation of cell population proliferation"/>
    <property type="evidence" value="ECO:0000250"/>
    <property type="project" value="UniProtKB"/>
</dbReference>
<dbReference type="GO" id="GO:1900153">
    <property type="term" value="P:positive regulation of nuclear-transcribed mRNA catabolic process, deadenylation-dependent decay"/>
    <property type="evidence" value="ECO:0000250"/>
    <property type="project" value="UniProtKB"/>
</dbReference>
<dbReference type="GO" id="GO:0060213">
    <property type="term" value="P:positive regulation of nuclear-transcribed mRNA poly(A) tail shortening"/>
    <property type="evidence" value="ECO:0000250"/>
    <property type="project" value="UniProtKB"/>
</dbReference>
<dbReference type="GO" id="GO:0006417">
    <property type="term" value="P:regulation of translation"/>
    <property type="evidence" value="ECO:0007669"/>
    <property type="project" value="UniProtKB-KW"/>
</dbReference>
<dbReference type="GO" id="GO:0031047">
    <property type="term" value="P:regulatory ncRNA-mediated gene silencing"/>
    <property type="evidence" value="ECO:0000250"/>
    <property type="project" value="UniProtKB"/>
</dbReference>
<dbReference type="FunFam" id="3.30.420.10:FF:000005">
    <property type="entry name" value="CCR4-NOT transcription complex subunit 7"/>
    <property type="match status" value="1"/>
</dbReference>
<dbReference type="Gene3D" id="3.30.420.10">
    <property type="entry name" value="Ribonuclease H-like superfamily/Ribonuclease H"/>
    <property type="match status" value="1"/>
</dbReference>
<dbReference type="InterPro" id="IPR039637">
    <property type="entry name" value="CNOT7/CNOT8/Pop2"/>
</dbReference>
<dbReference type="InterPro" id="IPR006941">
    <property type="entry name" value="RNase_CAF1"/>
</dbReference>
<dbReference type="InterPro" id="IPR012337">
    <property type="entry name" value="RNaseH-like_sf"/>
</dbReference>
<dbReference type="InterPro" id="IPR036397">
    <property type="entry name" value="RNaseH_sf"/>
</dbReference>
<dbReference type="PANTHER" id="PTHR10797">
    <property type="entry name" value="CCR4-NOT TRANSCRIPTION COMPLEX SUBUNIT"/>
    <property type="match status" value="1"/>
</dbReference>
<dbReference type="Pfam" id="PF04857">
    <property type="entry name" value="CAF1"/>
    <property type="match status" value="2"/>
</dbReference>
<dbReference type="SUPFAM" id="SSF53098">
    <property type="entry name" value="Ribonuclease H-like"/>
    <property type="match status" value="1"/>
</dbReference>
<reference key="1">
    <citation type="submission" date="2006-10" db="EMBL/GenBank/DDBJ databases">
        <authorList>
            <consortium name="NIH - Zebrafish Gene Collection (ZGC) project"/>
        </authorList>
    </citation>
    <scope>NUCLEOTIDE SEQUENCE [LARGE SCALE MRNA]</scope>
    <source>
        <tissue>Ovary</tissue>
    </source>
</reference>
<comment type="function">
    <text evidence="1">Has 3'-5' poly(A) exoribonuclease activity for synthetic poly(A) RNA substrate. Catalytic component of the CCR4-NOT complex which is one of the major cellular mRNA deadenylases and is linked to various cellular processes including bulk mRNA degradation, miRNA-mediated repression, translational repression during translational initiation and general transcription regulation. During miRNA-mediated repression the complex also seems to act as translational repressor during translational initiation. Additional complex functions may be a consequence of its influence on mRNA expression (By similarity).</text>
</comment>
<comment type="catalytic activity">
    <reaction>
        <text>Exonucleolytic cleavage of poly(A) to 5'-AMP.</text>
        <dbReference type="EC" id="3.1.13.4"/>
    </reaction>
</comment>
<comment type="cofactor">
    <cofactor evidence="2">
        <name>Mn(2+)</name>
        <dbReference type="ChEBI" id="CHEBI:29035"/>
    </cofactor>
    <cofactor evidence="2">
        <name>Mg(2+)</name>
        <dbReference type="ChEBI" id="CHEBI:18420"/>
    </cofactor>
    <cofactor evidence="2">
        <name>Co(2+)</name>
        <dbReference type="ChEBI" id="CHEBI:48828"/>
    </cofactor>
    <text evidence="2">Binds 2 divalent metal cations per subunit with RNAase activity being higher in presence of Mn(2+) than of Mg(2+) or Co(2+).</text>
</comment>
<comment type="subunit">
    <text evidence="1">Component of the CCR4-NOT complex.</text>
</comment>
<comment type="subcellular location">
    <subcellularLocation>
        <location evidence="1">Nucleus</location>
    </subcellularLocation>
    <subcellularLocation>
        <location evidence="1">Cytoplasm</location>
    </subcellularLocation>
</comment>
<comment type="similarity">
    <text evidence="3">Belongs to the CAF1 family.</text>
</comment>
<protein>
    <recommendedName>
        <fullName>CCR4-NOT transcription complex subunit 7</fullName>
        <ecNumber>3.1.13.4</ecNumber>
    </recommendedName>
    <alternativeName>
        <fullName>CCR4-associated factor 1</fullName>
        <shortName>CAF-1</shortName>
    </alternativeName>
</protein>
<proteinExistence type="evidence at transcript level"/>
<accession>Q08BM8</accession>
<name>CNOT7_DANRE</name>
<feature type="chain" id="PRO_0000313895" description="CCR4-NOT transcription complex subunit 7">
    <location>
        <begin position="1"/>
        <end position="286"/>
    </location>
</feature>
<feature type="binding site" evidence="1">
    <location>
        <position position="40"/>
    </location>
    <ligand>
        <name>a divalent metal cation</name>
        <dbReference type="ChEBI" id="CHEBI:60240"/>
        <label>1</label>
        <note>catalytic</note>
    </ligand>
</feature>
<feature type="binding site" evidence="1">
    <location>
        <position position="40"/>
    </location>
    <ligand>
        <name>a divalent metal cation</name>
        <dbReference type="ChEBI" id="CHEBI:60240"/>
        <label>2</label>
        <note>catalytic</note>
    </ligand>
</feature>
<feature type="binding site" evidence="1">
    <location>
        <position position="42"/>
    </location>
    <ligand>
        <name>a divalent metal cation</name>
        <dbReference type="ChEBI" id="CHEBI:60240"/>
        <label>2</label>
        <note>catalytic</note>
    </ligand>
</feature>
<feature type="binding site" evidence="1">
    <location>
        <position position="161"/>
    </location>
    <ligand>
        <name>a divalent metal cation</name>
        <dbReference type="ChEBI" id="CHEBI:60240"/>
        <label>1</label>
        <note>catalytic</note>
    </ligand>
</feature>
<feature type="binding site" evidence="1">
    <location>
        <position position="230"/>
    </location>
    <ligand>
        <name>a divalent metal cation</name>
        <dbReference type="ChEBI" id="CHEBI:60240"/>
        <label>2</label>
        <note>catalytic</note>
    </ligand>
</feature>
<feature type="binding site" evidence="1">
    <location>
        <position position="278"/>
    </location>
    <ligand>
        <name>a divalent metal cation</name>
        <dbReference type="ChEBI" id="CHEBI:60240"/>
        <label>1</label>
        <note>catalytic</note>
    </ligand>
</feature>